<reference key="1">
    <citation type="journal article" date="2006" name="PLoS Biol.">
        <title>The genome of deep-sea vent chemolithoautotroph Thiomicrospira crunogena XCL-2.</title>
        <authorList>
            <person name="Scott K.M."/>
            <person name="Sievert S.M."/>
            <person name="Abril F.N."/>
            <person name="Ball L.A."/>
            <person name="Barrett C.J."/>
            <person name="Blake R.A."/>
            <person name="Boller A.J."/>
            <person name="Chain P.S.G."/>
            <person name="Clark J.A."/>
            <person name="Davis C.R."/>
            <person name="Detter C."/>
            <person name="Do K.F."/>
            <person name="Dobrinski K.P."/>
            <person name="Faza B.I."/>
            <person name="Fitzpatrick K.A."/>
            <person name="Freyermuth S.K."/>
            <person name="Harmer T.L."/>
            <person name="Hauser L.J."/>
            <person name="Huegler M."/>
            <person name="Kerfeld C.A."/>
            <person name="Klotz M.G."/>
            <person name="Kong W.W."/>
            <person name="Land M."/>
            <person name="Lapidus A."/>
            <person name="Larimer F.W."/>
            <person name="Longo D.L."/>
            <person name="Lucas S."/>
            <person name="Malfatti S.A."/>
            <person name="Massey S.E."/>
            <person name="Martin D.D."/>
            <person name="McCuddin Z."/>
            <person name="Meyer F."/>
            <person name="Moore J.L."/>
            <person name="Ocampo L.H. Jr."/>
            <person name="Paul J.H."/>
            <person name="Paulsen I.T."/>
            <person name="Reep D.K."/>
            <person name="Ren Q."/>
            <person name="Ross R.L."/>
            <person name="Sato P.Y."/>
            <person name="Thomas P."/>
            <person name="Tinkham L.E."/>
            <person name="Zeruth G.T."/>
        </authorList>
    </citation>
    <scope>NUCLEOTIDE SEQUENCE [LARGE SCALE GENOMIC DNA]</scope>
    <source>
        <strain>DSM 25203 / XCL-2</strain>
    </source>
</reference>
<name>CMOA_HYDCU</name>
<accession>Q31JJ7</accession>
<feature type="chain" id="PRO_0000314395" description="Carboxy-S-adenosyl-L-methionine synthase">
    <location>
        <begin position="1"/>
        <end position="251"/>
    </location>
</feature>
<feature type="binding site" evidence="1">
    <location>
        <position position="48"/>
    </location>
    <ligand>
        <name>S-adenosyl-L-methionine</name>
        <dbReference type="ChEBI" id="CHEBI:59789"/>
    </ligand>
</feature>
<feature type="binding site" evidence="1">
    <location>
        <begin position="73"/>
        <end position="75"/>
    </location>
    <ligand>
        <name>S-adenosyl-L-methionine</name>
        <dbReference type="ChEBI" id="CHEBI:59789"/>
    </ligand>
</feature>
<feature type="binding site" evidence="1">
    <location>
        <position position="140"/>
    </location>
    <ligand>
        <name>S-adenosyl-L-methionine</name>
        <dbReference type="ChEBI" id="CHEBI:59789"/>
    </ligand>
</feature>
<feature type="binding site" evidence="1">
    <location>
        <position position="207"/>
    </location>
    <ligand>
        <name>S-adenosyl-L-methionine</name>
        <dbReference type="ChEBI" id="CHEBI:59789"/>
    </ligand>
</feature>
<dbReference type="EC" id="2.1.3.-" evidence="1"/>
<dbReference type="EMBL" id="CP000109">
    <property type="protein sequence ID" value="ABB40676.1"/>
    <property type="molecule type" value="Genomic_DNA"/>
</dbReference>
<dbReference type="SMR" id="Q31JJ7"/>
<dbReference type="STRING" id="317025.Tcr_0079"/>
<dbReference type="KEGG" id="tcx:Tcr_0079"/>
<dbReference type="eggNOG" id="COG2226">
    <property type="taxonomic scope" value="Bacteria"/>
</dbReference>
<dbReference type="HOGENOM" id="CLU_078475_0_0_6"/>
<dbReference type="GO" id="GO:0016743">
    <property type="term" value="F:carboxyl- or carbamoyltransferase activity"/>
    <property type="evidence" value="ECO:0007669"/>
    <property type="project" value="UniProtKB-UniRule"/>
</dbReference>
<dbReference type="GO" id="GO:1904047">
    <property type="term" value="F:S-adenosyl-L-methionine binding"/>
    <property type="evidence" value="ECO:0007669"/>
    <property type="project" value="UniProtKB-UniRule"/>
</dbReference>
<dbReference type="GO" id="GO:0002098">
    <property type="term" value="P:tRNA wobble uridine modification"/>
    <property type="evidence" value="ECO:0007669"/>
    <property type="project" value="InterPro"/>
</dbReference>
<dbReference type="CDD" id="cd02440">
    <property type="entry name" value="AdoMet_MTases"/>
    <property type="match status" value="1"/>
</dbReference>
<dbReference type="Gene3D" id="3.40.50.150">
    <property type="entry name" value="Vaccinia Virus protein VP39"/>
    <property type="match status" value="1"/>
</dbReference>
<dbReference type="HAMAP" id="MF_01589">
    <property type="entry name" value="Cx_SAM_synthase"/>
    <property type="match status" value="1"/>
</dbReference>
<dbReference type="InterPro" id="IPR005271">
    <property type="entry name" value="CmoA"/>
</dbReference>
<dbReference type="InterPro" id="IPR041698">
    <property type="entry name" value="Methyltransf_25"/>
</dbReference>
<dbReference type="InterPro" id="IPR029063">
    <property type="entry name" value="SAM-dependent_MTases_sf"/>
</dbReference>
<dbReference type="NCBIfam" id="TIGR00740">
    <property type="entry name" value="carboxy-S-adenosyl-L-methionine synthase CmoA"/>
    <property type="match status" value="1"/>
</dbReference>
<dbReference type="NCBIfam" id="NF011995">
    <property type="entry name" value="PRK15451.1"/>
    <property type="match status" value="1"/>
</dbReference>
<dbReference type="PANTHER" id="PTHR43861:SF2">
    <property type="entry name" value="CARBOXY-S-ADENOSYL-L-METHIONINE SYNTHASE"/>
    <property type="match status" value="1"/>
</dbReference>
<dbReference type="PANTHER" id="PTHR43861">
    <property type="entry name" value="TRANS-ACONITATE 2-METHYLTRANSFERASE-RELATED"/>
    <property type="match status" value="1"/>
</dbReference>
<dbReference type="Pfam" id="PF13649">
    <property type="entry name" value="Methyltransf_25"/>
    <property type="match status" value="1"/>
</dbReference>
<dbReference type="PIRSF" id="PIRSF006325">
    <property type="entry name" value="MeTrfase_bac"/>
    <property type="match status" value="1"/>
</dbReference>
<dbReference type="SUPFAM" id="SSF53335">
    <property type="entry name" value="S-adenosyl-L-methionine-dependent methyltransferases"/>
    <property type="match status" value="1"/>
</dbReference>
<gene>
    <name evidence="1" type="primary">cmoA</name>
    <name type="ordered locus">Tcr_0079</name>
</gene>
<organism>
    <name type="scientific">Hydrogenovibrio crunogenus (strain DSM 25203 / XCL-2)</name>
    <name type="common">Thiomicrospira crunogena</name>
    <dbReference type="NCBI Taxonomy" id="317025"/>
    <lineage>
        <taxon>Bacteria</taxon>
        <taxon>Pseudomonadati</taxon>
        <taxon>Pseudomonadota</taxon>
        <taxon>Gammaproteobacteria</taxon>
        <taxon>Thiotrichales</taxon>
        <taxon>Piscirickettsiaceae</taxon>
        <taxon>Hydrogenovibrio</taxon>
    </lineage>
</organism>
<keyword id="KW-0949">S-adenosyl-L-methionine</keyword>
<keyword id="KW-0808">Transferase</keyword>
<protein>
    <recommendedName>
        <fullName evidence="1">Carboxy-S-adenosyl-L-methionine synthase</fullName>
        <shortName evidence="1">Cx-SAM synthase</shortName>
        <ecNumber evidence="1">2.1.3.-</ecNumber>
    </recommendedName>
</protein>
<sequence length="251" mass="28020">MLISRYTGIPILKDTLYAHPYEAVGEFQFDDSVVAVFPDMIQRSVPGYQTILTGIGELTAKYAQPNSQLYDLGCSLGAATLTMRRKAPQGSQIIAVDTSQPMIERAKEHIEGFHSDIPVRLLCDDMTQIPIENASVVVINFTLQFIEPSARQVLLDKIYQGLKPGGILILSEKIHFESAELQEAIEHLQLQFKRANGYSELEISQKRASLENVLISDSEATHLNRLQQSGFKAANIWFQAYNFASFLAIKA</sequence>
<evidence type="ECO:0000255" key="1">
    <source>
        <dbReference type="HAMAP-Rule" id="MF_01589"/>
    </source>
</evidence>
<comment type="function">
    <text evidence="1">Catalyzes the conversion of S-adenosyl-L-methionine (SAM) to carboxy-S-adenosyl-L-methionine (Cx-SAM).</text>
</comment>
<comment type="catalytic activity">
    <reaction evidence="1">
        <text>prephenate + S-adenosyl-L-methionine = carboxy-S-adenosyl-L-methionine + 3-phenylpyruvate + H2O</text>
        <dbReference type="Rhea" id="RHEA:51692"/>
        <dbReference type="ChEBI" id="CHEBI:15377"/>
        <dbReference type="ChEBI" id="CHEBI:18005"/>
        <dbReference type="ChEBI" id="CHEBI:29934"/>
        <dbReference type="ChEBI" id="CHEBI:59789"/>
        <dbReference type="ChEBI" id="CHEBI:134278"/>
    </reaction>
</comment>
<comment type="subunit">
    <text evidence="1">Homodimer.</text>
</comment>
<comment type="similarity">
    <text evidence="1">Belongs to the class I-like SAM-binding methyltransferase superfamily. Cx-SAM synthase family.</text>
</comment>
<proteinExistence type="inferred from homology"/>